<evidence type="ECO:0000255" key="1"/>
<evidence type="ECO:0000305" key="2"/>
<evidence type="ECO:0000312" key="3">
    <source>
        <dbReference type="WormBase" id="ZK637.1"/>
    </source>
</evidence>
<reference key="1">
    <citation type="journal article" date="1992" name="Nature">
        <title>The C. elegans genome sequencing project: a beginning.</title>
        <authorList>
            <person name="Sulston J."/>
            <person name="Du Z."/>
            <person name="Thomas K."/>
            <person name="Wilson R."/>
            <person name="Hillier L."/>
            <person name="Staden R."/>
            <person name="Halloran N."/>
            <person name="Green P."/>
            <person name="Thierry-Mieg J."/>
            <person name="Qiu L."/>
            <person name="Dear S."/>
            <person name="Coulson A."/>
            <person name="Craxton M."/>
            <person name="Durbin R."/>
            <person name="Berks M."/>
            <person name="Metzstein M."/>
            <person name="Hawkins T."/>
            <person name="Ainscough R."/>
            <person name="Waterston R."/>
        </authorList>
    </citation>
    <scope>NUCLEOTIDE SEQUENCE [LARGE SCALE GENOMIC DNA]</scope>
    <source>
        <strain>Bristol N2</strain>
    </source>
</reference>
<reference key="2">
    <citation type="journal article" date="1998" name="Science">
        <title>Genome sequence of the nematode C. elegans: a platform for investigating biology.</title>
        <authorList>
            <consortium name="The C. elegans sequencing consortium"/>
        </authorList>
    </citation>
    <scope>NUCLEOTIDE SEQUENCE [LARGE SCALE GENOMIC DNA]</scope>
    <source>
        <strain>Bristol N2</strain>
    </source>
</reference>
<accession>P30638</accession>
<accession>Q21101</accession>
<feature type="chain" id="PRO_0000050466" description="Putative transporter svop-1" evidence="2">
    <location>
        <begin position="1"/>
        <end position="520"/>
    </location>
</feature>
<feature type="topological domain" description="Cytoplasmic" evidence="1">
    <location>
        <begin position="1"/>
        <end position="85"/>
    </location>
</feature>
<feature type="transmembrane region" description="Helical; Name=1" evidence="1">
    <location>
        <begin position="86"/>
        <end position="106"/>
    </location>
</feature>
<feature type="topological domain" description="Extracellular" evidence="1">
    <location>
        <begin position="107"/>
        <end position="120"/>
    </location>
</feature>
<feature type="transmembrane region" description="Helical; Name=2" evidence="1">
    <location>
        <begin position="121"/>
        <end position="141"/>
    </location>
</feature>
<feature type="topological domain" description="Cytoplasmic" evidence="1">
    <location>
        <begin position="142"/>
        <end position="157"/>
    </location>
</feature>
<feature type="transmembrane region" description="Helical; Name=3" evidence="1">
    <location>
        <begin position="158"/>
        <end position="178"/>
    </location>
</feature>
<feature type="topological domain" description="Extracellular" evidence="1">
    <location>
        <position position="179"/>
    </location>
</feature>
<feature type="transmembrane region" description="Helical; Name=4" evidence="1">
    <location>
        <begin position="180"/>
        <end position="200"/>
    </location>
</feature>
<feature type="topological domain" description="Cytoplasmic" evidence="1">
    <location>
        <begin position="201"/>
        <end position="208"/>
    </location>
</feature>
<feature type="transmembrane region" description="Helical; Name=5" evidence="1">
    <location>
        <begin position="209"/>
        <end position="229"/>
    </location>
</feature>
<feature type="topological domain" description="Extracellular" evidence="1">
    <location>
        <begin position="230"/>
        <end position="237"/>
    </location>
</feature>
<feature type="transmembrane region" description="Helical; Name=6" evidence="1">
    <location>
        <begin position="238"/>
        <end position="258"/>
    </location>
</feature>
<feature type="topological domain" description="Cytoplasmic" evidence="1">
    <location>
        <begin position="259"/>
        <end position="319"/>
    </location>
</feature>
<feature type="transmembrane region" description="Helical; Name=7" evidence="1">
    <location>
        <begin position="320"/>
        <end position="340"/>
    </location>
</feature>
<feature type="topological domain" description="Extracellular" evidence="1">
    <location>
        <begin position="341"/>
        <end position="372"/>
    </location>
</feature>
<feature type="transmembrane region" description="Helical; Name=8" evidence="1">
    <location>
        <begin position="373"/>
        <end position="393"/>
    </location>
</feature>
<feature type="topological domain" description="Cytoplasmic" evidence="1">
    <location>
        <begin position="394"/>
        <end position="410"/>
    </location>
</feature>
<feature type="transmembrane region" description="Helical; Name=9" evidence="1">
    <location>
        <begin position="411"/>
        <end position="431"/>
    </location>
</feature>
<feature type="topological domain" description="Extracellular" evidence="1">
    <location>
        <begin position="432"/>
        <end position="434"/>
    </location>
</feature>
<feature type="transmembrane region" description="Helical; Name=10" evidence="1">
    <location>
        <begin position="435"/>
        <end position="455"/>
    </location>
</feature>
<feature type="topological domain" description="Cytoplasmic" evidence="1">
    <location>
        <begin position="456"/>
        <end position="461"/>
    </location>
</feature>
<feature type="transmembrane region" description="Helical; Name=11" evidence="1">
    <location>
        <begin position="462"/>
        <end position="487"/>
    </location>
</feature>
<feature type="topological domain" description="Extracellular" evidence="1">
    <location>
        <begin position="488"/>
        <end position="489"/>
    </location>
</feature>
<feature type="transmembrane region" description="Helical; Name=12" evidence="1">
    <location>
        <begin position="490"/>
        <end position="509"/>
    </location>
</feature>
<feature type="topological domain" description="Cytoplasmic" evidence="1">
    <location>
        <begin position="510"/>
        <end position="520"/>
    </location>
</feature>
<protein>
    <recommendedName>
        <fullName evidence="2">Putative transporter svop-1</fullName>
    </recommendedName>
</protein>
<organism>
    <name type="scientific">Caenorhabditis elegans</name>
    <dbReference type="NCBI Taxonomy" id="6239"/>
    <lineage>
        <taxon>Eukaryota</taxon>
        <taxon>Metazoa</taxon>
        <taxon>Ecdysozoa</taxon>
        <taxon>Nematoda</taxon>
        <taxon>Chromadorea</taxon>
        <taxon>Rhabditida</taxon>
        <taxon>Rhabditina</taxon>
        <taxon>Rhabditomorpha</taxon>
        <taxon>Rhabditoidea</taxon>
        <taxon>Rhabditidae</taxon>
        <taxon>Peloderinae</taxon>
        <taxon>Caenorhabditis</taxon>
    </lineage>
</organism>
<keyword id="KW-0472">Membrane</keyword>
<keyword id="KW-1185">Reference proteome</keyword>
<keyword id="KW-0812">Transmembrane</keyword>
<keyword id="KW-1133">Transmembrane helix</keyword>
<keyword id="KW-0813">Transport</keyword>
<dbReference type="EMBL" id="Z11115">
    <property type="protein sequence ID" value="CAA77460.2"/>
    <property type="molecule type" value="Genomic_DNA"/>
</dbReference>
<dbReference type="EMBL" id="Z22175">
    <property type="protein sequence ID" value="CAA77460.2"/>
    <property type="status" value="JOINED"/>
    <property type="molecule type" value="Genomic_DNA"/>
</dbReference>
<dbReference type="PIR" id="S15786">
    <property type="entry name" value="S15786"/>
</dbReference>
<dbReference type="PIR" id="T23190">
    <property type="entry name" value="T23190"/>
</dbReference>
<dbReference type="RefSeq" id="NP_498960.2">
    <property type="nucleotide sequence ID" value="NM_066559.5"/>
</dbReference>
<dbReference type="SMR" id="P30638"/>
<dbReference type="FunCoup" id="P30638">
    <property type="interactions" value="163"/>
</dbReference>
<dbReference type="STRING" id="6239.ZK637.1.1"/>
<dbReference type="PaxDb" id="6239-ZK637.1"/>
<dbReference type="PeptideAtlas" id="P30638"/>
<dbReference type="EnsemblMetazoa" id="ZK637.1.1">
    <property type="protein sequence ID" value="ZK637.1.1"/>
    <property type="gene ID" value="WBGene00014021"/>
</dbReference>
<dbReference type="EnsemblMetazoa" id="ZK637.1.2">
    <property type="protein sequence ID" value="ZK637.1.2"/>
    <property type="gene ID" value="WBGene00014021"/>
</dbReference>
<dbReference type="GeneID" id="176250"/>
<dbReference type="KEGG" id="cel:CELE_ZK637.1"/>
<dbReference type="UCSC" id="ZK637.1.1">
    <property type="organism name" value="c. elegans"/>
</dbReference>
<dbReference type="AGR" id="WB:WBGene00014021"/>
<dbReference type="CTD" id="176250"/>
<dbReference type="WormBase" id="ZK637.1">
    <property type="protein sequence ID" value="CE32291"/>
    <property type="gene ID" value="WBGene00014021"/>
    <property type="gene designation" value="svop-1"/>
</dbReference>
<dbReference type="eggNOG" id="KOG0253">
    <property type="taxonomic scope" value="Eukaryota"/>
</dbReference>
<dbReference type="GeneTree" id="ENSGT00940000155403"/>
<dbReference type="HOGENOM" id="CLU_001265_46_0_1"/>
<dbReference type="InParanoid" id="P30638"/>
<dbReference type="OMA" id="LLWFIWM"/>
<dbReference type="OrthoDB" id="4139357at2759"/>
<dbReference type="PhylomeDB" id="P30638"/>
<dbReference type="PRO" id="PR:P30638"/>
<dbReference type="Proteomes" id="UP000001940">
    <property type="component" value="Chromosome III"/>
</dbReference>
<dbReference type="Bgee" id="WBGene00014021">
    <property type="expression patterns" value="Expressed in pharyngeal muscle cell (C elegans) and 3 other cell types or tissues"/>
</dbReference>
<dbReference type="GO" id="GO:0016020">
    <property type="term" value="C:membrane"/>
    <property type="evidence" value="ECO:0007669"/>
    <property type="project" value="UniProtKB-SubCell"/>
</dbReference>
<dbReference type="GO" id="GO:0022857">
    <property type="term" value="F:transmembrane transporter activity"/>
    <property type="evidence" value="ECO:0007669"/>
    <property type="project" value="InterPro"/>
</dbReference>
<dbReference type="CDD" id="cd17441">
    <property type="entry name" value="MFS_SVOP"/>
    <property type="match status" value="1"/>
</dbReference>
<dbReference type="Gene3D" id="1.20.1250.20">
    <property type="entry name" value="MFS general substrate transporter like domains"/>
    <property type="match status" value="1"/>
</dbReference>
<dbReference type="InterPro" id="IPR020846">
    <property type="entry name" value="MFS_dom"/>
</dbReference>
<dbReference type="InterPro" id="IPR005828">
    <property type="entry name" value="MFS_sugar_transport-like"/>
</dbReference>
<dbReference type="InterPro" id="IPR036259">
    <property type="entry name" value="MFS_trans_sf"/>
</dbReference>
<dbReference type="InterPro" id="IPR004749">
    <property type="entry name" value="Orgcat_transp/SVOP"/>
</dbReference>
<dbReference type="InterPro" id="IPR047969">
    <property type="entry name" value="SVOP-like_MFS_dom"/>
</dbReference>
<dbReference type="NCBIfam" id="TIGR00898">
    <property type="entry name" value="2A0119"/>
    <property type="match status" value="1"/>
</dbReference>
<dbReference type="PANTHER" id="PTHR23511:SF5">
    <property type="entry name" value="MAJOR FACILITATOR-TYPE TRANSPORTER HXNZ-RELATED"/>
    <property type="match status" value="1"/>
</dbReference>
<dbReference type="PANTHER" id="PTHR23511">
    <property type="entry name" value="SYNAPTIC VESICLE GLYCOPROTEIN 2"/>
    <property type="match status" value="1"/>
</dbReference>
<dbReference type="Pfam" id="PF00083">
    <property type="entry name" value="Sugar_tr"/>
    <property type="match status" value="1"/>
</dbReference>
<dbReference type="SUPFAM" id="SSF103473">
    <property type="entry name" value="MFS general substrate transporter"/>
    <property type="match status" value="1"/>
</dbReference>
<dbReference type="PROSITE" id="PS50850">
    <property type="entry name" value="MFS"/>
    <property type="match status" value="1"/>
</dbReference>
<proteinExistence type="inferred from homology"/>
<name>SVOP_CAEEL</name>
<sequence length="520" mass="57203">MGDKAILTEVLEASNLTEAYVDLTAKQLIKEIRHVGDDFAVRYSNLDDRTELGEPTDQRSPDSEKTFTVDEAVEALGFGRFQLKLSILTGMAWMADAMEMMLLSLISPALACEWGISSVQQALVTTCVFSGMMLSSTFWGKICDRFGRRKGLTFSTLVACIMGVISGMSPHFYVLLFFRGLTGFGIGGVPQSVTLYAEFLPTAQRAKCVVLIESFWAIGAVFEALLAYFVMESFGWRALMFLSSLPLGIFAVASFWLPESARFDMASGHPERALETLQAAARMNRVQLPTGRLVSSTKAGSESRGDIANLLSPDLRKTTILLWCIWAITAFSYYGMVLFTTVLFQSHDECHGGLFSNGTQMEVCQPLTRSDYFDLLSTTLAEFPGLIITVLIIEWFGRKKTMALEYAVFAIFTFLLYFCLDRFTVTVLIFVARAFISGAFQCAYVYTPEVYPTTLRAVGLGTCSAMARIGAIVTPFIAQVASEKSLSLPIGIYGTAAILGLIASLSLPIETKGRQMMDSH</sequence>
<gene>
    <name evidence="3" type="primary">svop-1</name>
    <name evidence="3" type="ORF">ZK637.1</name>
</gene>
<comment type="subcellular location">
    <subcellularLocation>
        <location evidence="2">Membrane</location>
        <topology evidence="2">Multi-pass membrane protein</topology>
    </subcellularLocation>
</comment>
<comment type="similarity">
    <text evidence="2">Belongs to the major facilitator superfamily.</text>
</comment>